<protein>
    <recommendedName>
        <fullName>Transmembrane protein 231</fullName>
    </recommendedName>
</protein>
<gene>
    <name type="primary">TMEM231</name>
</gene>
<proteinExistence type="evidence at transcript level"/>
<name>TM231_BOVIN</name>
<keyword id="KW-1003">Cell membrane</keyword>
<keyword id="KW-0966">Cell projection</keyword>
<keyword id="KW-0969">Cilium</keyword>
<keyword id="KW-0970">Cilium biogenesis/degradation</keyword>
<keyword id="KW-0325">Glycoprotein</keyword>
<keyword id="KW-0472">Membrane</keyword>
<keyword id="KW-1185">Reference proteome</keyword>
<keyword id="KW-0812">Transmembrane</keyword>
<keyword id="KW-1133">Transmembrane helix</keyword>
<accession>A7MB75</accession>
<reference key="1">
    <citation type="submission" date="2007-07" db="EMBL/GenBank/DDBJ databases">
        <authorList>
            <consortium name="NIH - Mammalian Gene Collection (MGC) project"/>
        </authorList>
    </citation>
    <scope>NUCLEOTIDE SEQUENCE [LARGE SCALE MRNA]</scope>
    <source>
        <strain>Hereford</strain>
        <tissue>Fetal muscle</tissue>
    </source>
</reference>
<evidence type="ECO:0000250" key="1"/>
<evidence type="ECO:0000250" key="2">
    <source>
        <dbReference type="UniProtKB" id="Q9H6L2"/>
    </source>
</evidence>
<evidence type="ECO:0000255" key="3"/>
<evidence type="ECO:0000305" key="4"/>
<sequence length="316" mass="36004">MALYELFAHPVERGYRAGLCSKAALFLLLATALTYIPPLLVAFRSHGFWLKRSSYEEQPTVRFQHQVLLVALLGSEPGGFLAWSTFPAFNRLQEGHLRVPLVSAREEDRNQDGKMDMLHFKLELPLQSTEQVLGVQLILTFSYQLHRMSTFVMQSMAFLQSSFALPGSQLYVNGDLRLQQKQPLGYGGLDVRYNVSVINGTSPFASDYDLTRIVAAYQERNVTTILTDPSPIWLVGRAAEAPFVVNAVIRYPVEVISYLPGFWEMIKFAWIQYVSILLIFLWAFERIKRFVFQNQVVTTIPVTAMPQGELYKEHLS</sequence>
<dbReference type="EMBL" id="BC151375">
    <property type="protein sequence ID" value="AAI51376.1"/>
    <property type="molecule type" value="mRNA"/>
</dbReference>
<dbReference type="RefSeq" id="NP_001094548.1">
    <property type="nucleotide sequence ID" value="NM_001101078.1"/>
</dbReference>
<dbReference type="FunCoup" id="A7MB75">
    <property type="interactions" value="1003"/>
</dbReference>
<dbReference type="STRING" id="9913.ENSBTAP00000062839"/>
<dbReference type="GlyCosmos" id="A7MB75">
    <property type="glycosylation" value="3 sites, No reported glycans"/>
</dbReference>
<dbReference type="GlyGen" id="A7MB75">
    <property type="glycosylation" value="3 sites"/>
</dbReference>
<dbReference type="PaxDb" id="9913-ENSBTAP00000020510"/>
<dbReference type="Ensembl" id="ENSBTAT00000020510.6">
    <property type="protein sequence ID" value="ENSBTAP00000020510.4"/>
    <property type="gene ID" value="ENSBTAG00000015432.6"/>
</dbReference>
<dbReference type="GeneID" id="511832"/>
<dbReference type="KEGG" id="bta:511832"/>
<dbReference type="CTD" id="79583"/>
<dbReference type="VEuPathDB" id="HostDB:ENSBTAG00000015432"/>
<dbReference type="VGNC" id="VGNC:52257">
    <property type="gene designation" value="TMEM231"/>
</dbReference>
<dbReference type="eggNOG" id="KOG4838">
    <property type="taxonomic scope" value="Eukaryota"/>
</dbReference>
<dbReference type="GeneTree" id="ENSGT00390000015366"/>
<dbReference type="HOGENOM" id="CLU_070969_0_0_1"/>
<dbReference type="InParanoid" id="A7MB75"/>
<dbReference type="OMA" id="PALYTRY"/>
<dbReference type="OrthoDB" id="426438at2759"/>
<dbReference type="TreeFam" id="TF312969"/>
<dbReference type="Proteomes" id="UP000009136">
    <property type="component" value="Chromosome 18"/>
</dbReference>
<dbReference type="GO" id="GO:0060170">
    <property type="term" value="C:ciliary membrane"/>
    <property type="evidence" value="ECO:0000250"/>
    <property type="project" value="UniProtKB"/>
</dbReference>
<dbReference type="GO" id="GO:0035869">
    <property type="term" value="C:ciliary transition zone"/>
    <property type="evidence" value="ECO:0000250"/>
    <property type="project" value="UniProtKB"/>
</dbReference>
<dbReference type="GO" id="GO:0036038">
    <property type="term" value="C:MKS complex"/>
    <property type="evidence" value="ECO:0000250"/>
    <property type="project" value="UniProtKB"/>
</dbReference>
<dbReference type="GO" id="GO:0043010">
    <property type="term" value="P:camera-type eye development"/>
    <property type="evidence" value="ECO:0007669"/>
    <property type="project" value="Ensembl"/>
</dbReference>
<dbReference type="GO" id="GO:0060271">
    <property type="term" value="P:cilium assembly"/>
    <property type="evidence" value="ECO:0000250"/>
    <property type="project" value="UniProtKB"/>
</dbReference>
<dbReference type="GO" id="GO:0042733">
    <property type="term" value="P:embryonic digit morphogenesis"/>
    <property type="evidence" value="ECO:0007669"/>
    <property type="project" value="Ensembl"/>
</dbReference>
<dbReference type="GO" id="GO:0001701">
    <property type="term" value="P:in utero embryonic development"/>
    <property type="evidence" value="ECO:0007669"/>
    <property type="project" value="Ensembl"/>
</dbReference>
<dbReference type="GO" id="GO:0060563">
    <property type="term" value="P:neuroepithelial cell differentiation"/>
    <property type="evidence" value="ECO:0007669"/>
    <property type="project" value="Ensembl"/>
</dbReference>
<dbReference type="GO" id="GO:0032880">
    <property type="term" value="P:regulation of protein localization"/>
    <property type="evidence" value="ECO:0000318"/>
    <property type="project" value="GO_Central"/>
</dbReference>
<dbReference type="GO" id="GO:0007224">
    <property type="term" value="P:smoothened signaling pathway"/>
    <property type="evidence" value="ECO:0000250"/>
    <property type="project" value="UniProtKB"/>
</dbReference>
<dbReference type="GO" id="GO:0001944">
    <property type="term" value="P:vasculature development"/>
    <property type="evidence" value="ECO:0007669"/>
    <property type="project" value="Ensembl"/>
</dbReference>
<dbReference type="InterPro" id="IPR019306">
    <property type="entry name" value="TMEM231"/>
</dbReference>
<dbReference type="PANTHER" id="PTHR14605">
    <property type="entry name" value="CHST5 PROTEIN"/>
    <property type="match status" value="1"/>
</dbReference>
<dbReference type="PANTHER" id="PTHR14605:SF1">
    <property type="entry name" value="TRANSMEMBRANE PROTEIN 231"/>
    <property type="match status" value="1"/>
</dbReference>
<dbReference type="Pfam" id="PF10149">
    <property type="entry name" value="TM231"/>
    <property type="match status" value="1"/>
</dbReference>
<organism>
    <name type="scientific">Bos taurus</name>
    <name type="common">Bovine</name>
    <dbReference type="NCBI Taxonomy" id="9913"/>
    <lineage>
        <taxon>Eukaryota</taxon>
        <taxon>Metazoa</taxon>
        <taxon>Chordata</taxon>
        <taxon>Craniata</taxon>
        <taxon>Vertebrata</taxon>
        <taxon>Euteleostomi</taxon>
        <taxon>Mammalia</taxon>
        <taxon>Eutheria</taxon>
        <taxon>Laurasiatheria</taxon>
        <taxon>Artiodactyla</taxon>
        <taxon>Ruminantia</taxon>
        <taxon>Pecora</taxon>
        <taxon>Bovidae</taxon>
        <taxon>Bovinae</taxon>
        <taxon>Bos</taxon>
    </lineage>
</organism>
<feature type="chain" id="PRO_0000317519" description="Transmembrane protein 231">
    <location>
        <begin position="1"/>
        <end position="316"/>
    </location>
</feature>
<feature type="transmembrane region" description="Helical" evidence="3">
    <location>
        <begin position="23"/>
        <end position="43"/>
    </location>
</feature>
<feature type="transmembrane region" description="Helical" evidence="3">
    <location>
        <begin position="262"/>
        <end position="282"/>
    </location>
</feature>
<feature type="glycosylation site" description="N-linked (GlcNAc...) asparagine" evidence="3">
    <location>
        <position position="194"/>
    </location>
</feature>
<feature type="glycosylation site" description="N-linked (GlcNAc...) asparagine" evidence="3">
    <location>
        <position position="199"/>
    </location>
</feature>
<feature type="glycosylation site" description="N-linked (GlcNAc...) asparagine" evidence="3">
    <location>
        <position position="221"/>
    </location>
</feature>
<comment type="function">
    <text evidence="1">Transmembrane component of the tectonic-like complex, a complex localized at the transition zone of primary cilia and acting as a barrier that prevents diffusion of transmembrane proteins between the cilia and plasma membranes. Required for ciliogenesis and sonic hedgehog/SHH signaling (By similarity).</text>
</comment>
<comment type="subunit">
    <text evidence="2">Part of the tectonic-like complex (also named B9 complex). Interacts with TMEM107.</text>
</comment>
<comment type="subcellular location">
    <subcellularLocation>
        <location evidence="1">Cell projection</location>
        <location evidence="1">Cilium membrane</location>
        <topology evidence="1">Multi-pass membrane protein</topology>
    </subcellularLocation>
    <text evidence="1">Localizes to the transition zone of primary cilia; SEPT2 is required for localization to the transition zone.</text>
</comment>
<comment type="similarity">
    <text evidence="4">Belongs to the TMEM231 family.</text>
</comment>